<evidence type="ECO:0000255" key="1">
    <source>
        <dbReference type="HAMAP-Rule" id="MF_00218"/>
    </source>
</evidence>
<protein>
    <recommendedName>
        <fullName evidence="1">Uroporphyrinogen decarboxylase</fullName>
        <shortName evidence="1">UPD</shortName>
        <shortName evidence="1">URO-D</shortName>
        <ecNumber evidence="1">4.1.1.37</ecNumber>
    </recommendedName>
</protein>
<feature type="chain" id="PRO_0000187582" description="Uroporphyrinogen decarboxylase">
    <location>
        <begin position="1"/>
        <end position="348"/>
    </location>
</feature>
<feature type="binding site" evidence="1">
    <location>
        <begin position="27"/>
        <end position="31"/>
    </location>
    <ligand>
        <name>substrate</name>
    </ligand>
</feature>
<feature type="binding site" evidence="1">
    <location>
        <position position="46"/>
    </location>
    <ligand>
        <name>substrate</name>
    </ligand>
</feature>
<feature type="binding site" evidence="1">
    <location>
        <position position="76"/>
    </location>
    <ligand>
        <name>substrate</name>
    </ligand>
</feature>
<feature type="binding site" evidence="1">
    <location>
        <position position="152"/>
    </location>
    <ligand>
        <name>substrate</name>
    </ligand>
</feature>
<feature type="binding site" evidence="1">
    <location>
        <position position="207"/>
    </location>
    <ligand>
        <name>substrate</name>
    </ligand>
</feature>
<feature type="binding site" evidence="1">
    <location>
        <position position="320"/>
    </location>
    <ligand>
        <name>substrate</name>
    </ligand>
</feature>
<feature type="site" description="Transition state stabilizer" evidence="1">
    <location>
        <position position="76"/>
    </location>
</feature>
<proteinExistence type="inferred from homology"/>
<reference key="1">
    <citation type="journal article" date="2003" name="Nature">
        <title>Genome sequence of Bacillus cereus and comparative analysis with Bacillus anthracis.</title>
        <authorList>
            <person name="Ivanova N."/>
            <person name="Sorokin A."/>
            <person name="Anderson I."/>
            <person name="Galleron N."/>
            <person name="Candelon B."/>
            <person name="Kapatral V."/>
            <person name="Bhattacharyya A."/>
            <person name="Reznik G."/>
            <person name="Mikhailova N."/>
            <person name="Lapidus A."/>
            <person name="Chu L."/>
            <person name="Mazur M."/>
            <person name="Goltsman E."/>
            <person name="Larsen N."/>
            <person name="D'Souza M."/>
            <person name="Walunas T."/>
            <person name="Grechkin Y."/>
            <person name="Pusch G."/>
            <person name="Haselkorn R."/>
            <person name="Fonstein M."/>
            <person name="Ehrlich S.D."/>
            <person name="Overbeek R."/>
            <person name="Kyrpides N.C."/>
        </authorList>
    </citation>
    <scope>NUCLEOTIDE SEQUENCE [LARGE SCALE GENOMIC DNA]</scope>
    <source>
        <strain>ATCC 14579 / DSM 31 / CCUG 7414 / JCM 2152 / NBRC 15305 / NCIMB 9373 / NCTC 2599 / NRRL B-3711</strain>
    </source>
</reference>
<accession>Q81GW6</accession>
<name>DCUP_BACCR</name>
<gene>
    <name evidence="1" type="primary">hemE</name>
    <name type="ordered locus">BC_1068</name>
</gene>
<dbReference type="EC" id="4.1.1.37" evidence="1"/>
<dbReference type="EMBL" id="AE016877">
    <property type="protein sequence ID" value="AAP08055.1"/>
    <property type="molecule type" value="Genomic_DNA"/>
</dbReference>
<dbReference type="RefSeq" id="NP_830854.1">
    <property type="nucleotide sequence ID" value="NC_004722.1"/>
</dbReference>
<dbReference type="RefSeq" id="WP_000252605.1">
    <property type="nucleotide sequence ID" value="NZ_CP138336.1"/>
</dbReference>
<dbReference type="SMR" id="Q81GW6"/>
<dbReference type="STRING" id="226900.BC_1068"/>
<dbReference type="GeneID" id="67465593"/>
<dbReference type="KEGG" id="bce:BC1068"/>
<dbReference type="PATRIC" id="fig|226900.8.peg.1026"/>
<dbReference type="HOGENOM" id="CLU_040933_0_1_9"/>
<dbReference type="OrthoDB" id="9806656at2"/>
<dbReference type="UniPathway" id="UPA00251">
    <property type="reaction ID" value="UER00321"/>
</dbReference>
<dbReference type="Proteomes" id="UP000001417">
    <property type="component" value="Chromosome"/>
</dbReference>
<dbReference type="GO" id="GO:0005829">
    <property type="term" value="C:cytosol"/>
    <property type="evidence" value="ECO:0000318"/>
    <property type="project" value="GO_Central"/>
</dbReference>
<dbReference type="GO" id="GO:0004853">
    <property type="term" value="F:uroporphyrinogen decarboxylase activity"/>
    <property type="evidence" value="ECO:0000318"/>
    <property type="project" value="GO_Central"/>
</dbReference>
<dbReference type="GO" id="GO:0006783">
    <property type="term" value="P:heme biosynthetic process"/>
    <property type="evidence" value="ECO:0000318"/>
    <property type="project" value="GO_Central"/>
</dbReference>
<dbReference type="GO" id="GO:0006782">
    <property type="term" value="P:protoporphyrinogen IX biosynthetic process"/>
    <property type="evidence" value="ECO:0007669"/>
    <property type="project" value="UniProtKB-UniRule"/>
</dbReference>
<dbReference type="CDD" id="cd00717">
    <property type="entry name" value="URO-D"/>
    <property type="match status" value="1"/>
</dbReference>
<dbReference type="FunFam" id="3.20.20.210:FF:000005">
    <property type="entry name" value="Uroporphyrinogen decarboxylase"/>
    <property type="match status" value="1"/>
</dbReference>
<dbReference type="Gene3D" id="3.20.20.210">
    <property type="match status" value="1"/>
</dbReference>
<dbReference type="HAMAP" id="MF_00218">
    <property type="entry name" value="URO_D"/>
    <property type="match status" value="1"/>
</dbReference>
<dbReference type="InterPro" id="IPR038071">
    <property type="entry name" value="UROD/MetE-like_sf"/>
</dbReference>
<dbReference type="InterPro" id="IPR006361">
    <property type="entry name" value="Uroporphyrinogen_deCO2ase_HemE"/>
</dbReference>
<dbReference type="InterPro" id="IPR000257">
    <property type="entry name" value="Uroporphyrinogen_deCOase"/>
</dbReference>
<dbReference type="NCBIfam" id="TIGR01464">
    <property type="entry name" value="hemE"/>
    <property type="match status" value="1"/>
</dbReference>
<dbReference type="PANTHER" id="PTHR21091">
    <property type="entry name" value="METHYLTETRAHYDROFOLATE:HOMOCYSTEINE METHYLTRANSFERASE RELATED"/>
    <property type="match status" value="1"/>
</dbReference>
<dbReference type="PANTHER" id="PTHR21091:SF169">
    <property type="entry name" value="UROPORPHYRINOGEN DECARBOXYLASE"/>
    <property type="match status" value="1"/>
</dbReference>
<dbReference type="Pfam" id="PF01208">
    <property type="entry name" value="URO-D"/>
    <property type="match status" value="1"/>
</dbReference>
<dbReference type="SUPFAM" id="SSF51726">
    <property type="entry name" value="UROD/MetE-like"/>
    <property type="match status" value="1"/>
</dbReference>
<dbReference type="PROSITE" id="PS00906">
    <property type="entry name" value="UROD_1"/>
    <property type="match status" value="1"/>
</dbReference>
<dbReference type="PROSITE" id="PS00907">
    <property type="entry name" value="UROD_2"/>
    <property type="match status" value="1"/>
</dbReference>
<keyword id="KW-0963">Cytoplasm</keyword>
<keyword id="KW-0210">Decarboxylase</keyword>
<keyword id="KW-0456">Lyase</keyword>
<keyword id="KW-0627">Porphyrin biosynthesis</keyword>
<keyword id="KW-1185">Reference proteome</keyword>
<sequence length="348" mass="39239">MVRTINETFLKACRGERTDYVPAWYMRQAGRSQPEYRKIKEKYSLFEITHNPELCAYVTKLPVDQYNVDAAILYKDIMSPLPAIGVDVEIKSGIGPVIDNPIRSLQDVEKLGEINPEDDVPYILDTIRLLTTEMLDVPLIGFSGAPFTLASYMIEGGPSRNYHNTKAFMYAEPKAWFALMDKLADMVITYLKAQINAGAKAVQIFDSWVGTVNVADYRVFIKPAMERIFAEVRKMGVPMIMHGVGAAHLVNEWHDLPLDVVGLDWRLPIEEARARGVHKAVQGNMDPSFLLAPWSVIEEHVKGILDQGMKQPGYIFNLGHGVFPEVNPDTLKRLTTFIHEYSKGQLAK</sequence>
<organism>
    <name type="scientific">Bacillus cereus (strain ATCC 14579 / DSM 31 / CCUG 7414 / JCM 2152 / NBRC 15305 / NCIMB 9373 / NCTC 2599 / NRRL B-3711)</name>
    <dbReference type="NCBI Taxonomy" id="226900"/>
    <lineage>
        <taxon>Bacteria</taxon>
        <taxon>Bacillati</taxon>
        <taxon>Bacillota</taxon>
        <taxon>Bacilli</taxon>
        <taxon>Bacillales</taxon>
        <taxon>Bacillaceae</taxon>
        <taxon>Bacillus</taxon>
        <taxon>Bacillus cereus group</taxon>
    </lineage>
</organism>
<comment type="function">
    <text evidence="1">Catalyzes the decarboxylation of four acetate groups of uroporphyrinogen-III to yield coproporphyrinogen-III.</text>
</comment>
<comment type="catalytic activity">
    <reaction evidence="1">
        <text>uroporphyrinogen III + 4 H(+) = coproporphyrinogen III + 4 CO2</text>
        <dbReference type="Rhea" id="RHEA:19865"/>
        <dbReference type="ChEBI" id="CHEBI:15378"/>
        <dbReference type="ChEBI" id="CHEBI:16526"/>
        <dbReference type="ChEBI" id="CHEBI:57308"/>
        <dbReference type="ChEBI" id="CHEBI:57309"/>
        <dbReference type="EC" id="4.1.1.37"/>
    </reaction>
</comment>
<comment type="pathway">
    <text evidence="1">Porphyrin-containing compound metabolism; protoporphyrin-IX biosynthesis; coproporphyrinogen-III from 5-aminolevulinate: step 4/4.</text>
</comment>
<comment type="subunit">
    <text evidence="1">Homodimer.</text>
</comment>
<comment type="subcellular location">
    <subcellularLocation>
        <location evidence="1">Cytoplasm</location>
    </subcellularLocation>
</comment>
<comment type="similarity">
    <text evidence="1">Belongs to the uroporphyrinogen decarboxylase family.</text>
</comment>